<dbReference type="EMBL" id="AJ252268">
    <property type="protein sequence ID" value="CAB66144.1"/>
    <property type="molecule type" value="mRNA"/>
</dbReference>
<dbReference type="EMBL" id="AE014297">
    <property type="protein sequence ID" value="AAF55751.3"/>
    <property type="molecule type" value="Genomic_DNA"/>
</dbReference>
<dbReference type="EMBL" id="AE014297">
    <property type="protein sequence ID" value="ABW08708.1"/>
    <property type="molecule type" value="Genomic_DNA"/>
</dbReference>
<dbReference type="EMBL" id="BT044183">
    <property type="protein sequence ID" value="ACH92248.1"/>
    <property type="molecule type" value="mRNA"/>
</dbReference>
<dbReference type="EMBL" id="BT024235">
    <property type="protein sequence ID" value="ABC86297.1"/>
    <property type="status" value="ALT_FRAME"/>
    <property type="molecule type" value="mRNA"/>
</dbReference>
<dbReference type="RefSeq" id="NP_001097843.1">
    <molecule id="Q9U1H0-1"/>
    <property type="nucleotide sequence ID" value="NM_001104373.2"/>
</dbReference>
<dbReference type="RefSeq" id="NP_524992.1">
    <molecule id="Q9U1H0-2"/>
    <property type="nucleotide sequence ID" value="NM_080253.4"/>
</dbReference>
<dbReference type="SMR" id="Q9U1H0"/>
<dbReference type="BioGRID" id="72791">
    <property type="interactions" value="14"/>
</dbReference>
<dbReference type="DIP" id="DIP-23664N"/>
<dbReference type="FunCoup" id="Q9U1H0">
    <property type="interactions" value="1389"/>
</dbReference>
<dbReference type="IntAct" id="Q9U1H0">
    <property type="interactions" value="14"/>
</dbReference>
<dbReference type="MINT" id="Q9U1H0"/>
<dbReference type="STRING" id="7227.FBpp0306420"/>
<dbReference type="GlyGen" id="Q9U1H0">
    <property type="glycosylation" value="6 sites"/>
</dbReference>
<dbReference type="iPTMnet" id="Q9U1H0"/>
<dbReference type="DNASU" id="53560"/>
<dbReference type="EnsemblMetazoa" id="FBtr0305026">
    <molecule id="Q9U1H0-2"/>
    <property type="protein sequence ID" value="FBpp0293563"/>
    <property type="gene ID" value="FBgn0262582"/>
</dbReference>
<dbReference type="EnsemblMetazoa" id="FBtr0305027">
    <molecule id="Q9U1H0-1"/>
    <property type="protein sequence ID" value="FBpp0293564"/>
    <property type="gene ID" value="FBgn0262582"/>
</dbReference>
<dbReference type="GeneID" id="53560"/>
<dbReference type="KEGG" id="dme:Dmel_CG43122"/>
<dbReference type="UCSC" id="CG5067-RB">
    <property type="organism name" value="d. melanogaster"/>
</dbReference>
<dbReference type="AGR" id="FB:FBgn0262582"/>
<dbReference type="CTD" id="23152"/>
<dbReference type="FlyBase" id="FBgn0262582">
    <property type="gene designation" value="cic"/>
</dbReference>
<dbReference type="VEuPathDB" id="VectorBase:FBgn0262582"/>
<dbReference type="eggNOG" id="KOG2746">
    <property type="taxonomic scope" value="Eukaryota"/>
</dbReference>
<dbReference type="GeneTree" id="ENSGT00940000159960"/>
<dbReference type="HOGENOM" id="CLU_002375_0_0_1"/>
<dbReference type="InParanoid" id="Q9U1H0"/>
<dbReference type="OrthoDB" id="10051111at2759"/>
<dbReference type="SignaLink" id="Q9U1H0"/>
<dbReference type="BioGRID-ORCS" id="53560">
    <property type="hits" value="0 hits in 1 CRISPR screen"/>
</dbReference>
<dbReference type="GenomeRNAi" id="53560"/>
<dbReference type="PRO" id="PR:Q9U1H0"/>
<dbReference type="Proteomes" id="UP000000803">
    <property type="component" value="Chromosome 3R"/>
</dbReference>
<dbReference type="Bgee" id="FBgn0262582">
    <property type="expression patterns" value="Expressed in intestinal stem cell (Drosophila) in digestive tract and 290 other cell types or tissues"/>
</dbReference>
<dbReference type="ExpressionAtlas" id="Q9U1H0">
    <property type="expression patterns" value="baseline and differential"/>
</dbReference>
<dbReference type="GO" id="GO:0005829">
    <property type="term" value="C:cytosol"/>
    <property type="evidence" value="ECO:0000314"/>
    <property type="project" value="FlyBase"/>
</dbReference>
<dbReference type="GO" id="GO:0005634">
    <property type="term" value="C:nucleus"/>
    <property type="evidence" value="ECO:0000314"/>
    <property type="project" value="FlyBase"/>
</dbReference>
<dbReference type="GO" id="GO:0000981">
    <property type="term" value="F:DNA-binding transcription factor activity, RNA polymerase II-specific"/>
    <property type="evidence" value="ECO:0000318"/>
    <property type="project" value="GO_Central"/>
</dbReference>
<dbReference type="GO" id="GO:0140297">
    <property type="term" value="F:DNA-binding transcription factor binding"/>
    <property type="evidence" value="ECO:0000353"/>
    <property type="project" value="FlyBase"/>
</dbReference>
<dbReference type="GO" id="GO:0001227">
    <property type="term" value="F:DNA-binding transcription repressor activity, RNA polymerase II-specific"/>
    <property type="evidence" value="ECO:0000314"/>
    <property type="project" value="FlyBase"/>
</dbReference>
<dbReference type="GO" id="GO:0000977">
    <property type="term" value="F:RNA polymerase II transcription regulatory region sequence-specific DNA binding"/>
    <property type="evidence" value="ECO:0000314"/>
    <property type="project" value="FlyBase"/>
</dbReference>
<dbReference type="GO" id="GO:0043565">
    <property type="term" value="F:sequence-specific DNA binding"/>
    <property type="evidence" value="ECO:0000314"/>
    <property type="project" value="FlyBase"/>
</dbReference>
<dbReference type="GO" id="GO:0046843">
    <property type="term" value="P:dorsal appendage formation"/>
    <property type="evidence" value="ECO:0000315"/>
    <property type="project" value="FlyBase"/>
</dbReference>
<dbReference type="GO" id="GO:0009953">
    <property type="term" value="P:dorsal/ventral pattern formation"/>
    <property type="evidence" value="ECO:0000315"/>
    <property type="project" value="FlyBase"/>
</dbReference>
<dbReference type="GO" id="GO:0007173">
    <property type="term" value="P:epidermal growth factor receptor signaling pathway"/>
    <property type="evidence" value="ECO:0000315"/>
    <property type="project" value="FlyBase"/>
</dbReference>
<dbReference type="GO" id="GO:0048592">
    <property type="term" value="P:eye morphogenesis"/>
    <property type="evidence" value="ECO:0000315"/>
    <property type="project" value="FlyBase"/>
</dbReference>
<dbReference type="GO" id="GO:0007474">
    <property type="term" value="P:imaginal disc-derived wing vein specification"/>
    <property type="evidence" value="ECO:0000315"/>
    <property type="project" value="FlyBase"/>
</dbReference>
<dbReference type="GO" id="GO:0007313">
    <property type="term" value="P:maternal specification of dorsal/ventral axis, oocyte, soma encoded"/>
    <property type="evidence" value="ECO:0000315"/>
    <property type="project" value="FlyBase"/>
</dbReference>
<dbReference type="GO" id="GO:0030308">
    <property type="term" value="P:negative regulation of cell growth"/>
    <property type="evidence" value="ECO:0000315"/>
    <property type="project" value="FlyBase"/>
</dbReference>
<dbReference type="GO" id="GO:0046621">
    <property type="term" value="P:negative regulation of organ growth"/>
    <property type="evidence" value="ECO:0000316"/>
    <property type="project" value="FlyBase"/>
</dbReference>
<dbReference type="GO" id="GO:0000122">
    <property type="term" value="P:negative regulation of transcription by RNA polymerase II"/>
    <property type="evidence" value="ECO:0000314"/>
    <property type="project" value="FlyBase"/>
</dbReference>
<dbReference type="GO" id="GO:0006355">
    <property type="term" value="P:regulation of DNA-templated transcription"/>
    <property type="evidence" value="ECO:0000315"/>
    <property type="project" value="FlyBase"/>
</dbReference>
<dbReference type="GO" id="GO:0006357">
    <property type="term" value="P:regulation of transcription by RNA polymerase II"/>
    <property type="evidence" value="ECO:0000318"/>
    <property type="project" value="GO_Central"/>
</dbReference>
<dbReference type="GO" id="GO:0007362">
    <property type="term" value="P:terminal region determination"/>
    <property type="evidence" value="ECO:0000315"/>
    <property type="project" value="FlyBase"/>
</dbReference>
<dbReference type="GO" id="GO:0008293">
    <property type="term" value="P:torso signaling pathway"/>
    <property type="evidence" value="ECO:0000314"/>
    <property type="project" value="FlyBase"/>
</dbReference>
<dbReference type="GO" id="GO:0048190">
    <property type="term" value="P:wing disc dorsal/ventral pattern formation"/>
    <property type="evidence" value="ECO:0000316"/>
    <property type="project" value="FlyBase"/>
</dbReference>
<dbReference type="CDD" id="cd21990">
    <property type="entry name" value="HMG-box_CIC-like"/>
    <property type="match status" value="1"/>
</dbReference>
<dbReference type="FunFam" id="1.10.30.10:FF:000010">
    <property type="entry name" value="Capicua transcriptional repressor b"/>
    <property type="match status" value="1"/>
</dbReference>
<dbReference type="Gene3D" id="1.10.30.10">
    <property type="entry name" value="High mobility group box domain"/>
    <property type="match status" value="1"/>
</dbReference>
<dbReference type="InterPro" id="IPR052412">
    <property type="entry name" value="CC-Dev_Transcription_Reg"/>
</dbReference>
<dbReference type="InterPro" id="IPR009071">
    <property type="entry name" value="HMG_box_dom"/>
</dbReference>
<dbReference type="InterPro" id="IPR036910">
    <property type="entry name" value="HMG_box_dom_sf"/>
</dbReference>
<dbReference type="PANTHER" id="PTHR13059">
    <property type="entry name" value="HMG-BOX TRANSCRIPTION FACTOR BBX"/>
    <property type="match status" value="1"/>
</dbReference>
<dbReference type="PANTHER" id="PTHR13059:SF13">
    <property type="entry name" value="PROTEIN CAPICUA HOMOLOG"/>
    <property type="match status" value="1"/>
</dbReference>
<dbReference type="Pfam" id="PF00505">
    <property type="entry name" value="HMG_box"/>
    <property type="match status" value="1"/>
</dbReference>
<dbReference type="SMART" id="SM00398">
    <property type="entry name" value="HMG"/>
    <property type="match status" value="1"/>
</dbReference>
<dbReference type="SUPFAM" id="SSF47095">
    <property type="entry name" value="HMG-box"/>
    <property type="match status" value="1"/>
</dbReference>
<dbReference type="PROSITE" id="PS50118">
    <property type="entry name" value="HMG_BOX_2"/>
    <property type="match status" value="1"/>
</dbReference>
<protein>
    <recommendedName>
        <fullName>Putative transcription factor capicua</fullName>
    </recommendedName>
    <alternativeName>
        <fullName>Protein fettucine</fullName>
    </alternativeName>
</protein>
<gene>
    <name type="primary">cic</name>
    <name type="synonym">fet</name>
    <name type="ORF">CG43122</name>
</gene>
<sequence length="1832" mass="195662">MNAFQDFELGAKLYLQCLLSLSSSRSATPSYTSPVNHAGASPLNAIAHSPVNVSATHRQNFFTPIANQSQQQQQQQPVAVPLDSKWKTTPSPVLYNANNNSSNNNTSSSNNNNNSNWEVGSNSNTHVAATAAATSTVGAQPLPPQTTPVSLVMHAPPPQQQPLQQQHHHHQPPPPPPASLPAPSAPPTSGSSSSHNSVGHATSVIRISSSQQQHQQQQQHQQQAHPHVVVSGGQTFHPVIVDATQLSVPLPPTTVSFHQPNTPTSTAASVASMSQDKMLAKNGYNAPWFKLLPHMTPMSKASPAPVTPTLTTSASSYNVVMMQQQQQHQQLQQQQQLQQQQQSPPQMPLNHNNNHLIVSAPLSSPGKPLNCSMNDAKVAAAAAAAAVANQRQKQQQEEPDDQLDDDVFETTTPGISANSKKQTAAMRLPTHNSNIRKLEECHDDGAAGAPATSAAKRRSQSLSALQQQQQQQQQAGAAGTAAGQPANKKIRRPMNAFMIFSKKHRKMVHKKHPNQDNRTVSKILGEWWYALKPEQKAQYHELASSVKDAHFKLHPEWKWCSKDRRKSSTSTATPGGKASGAAGTGDAKQRLVSVDGSDSLEHDMCPSTPGGSGSCGGQGISSDLQGDIIPLTIDNYNSTCDEAPTTISMKGNGNGKLMKNELPSDEDEQMLVVEEEQQQQTVKKIDLHCRERVNDSDMDDTPFDYRKQQPEANQRSAEEHSTSGANGQAINAPPLSGGEREITLKPKAIKAHPVLESNMLPYTQMSIYTQYTSPKNPIGVTPFQPTGGAFKSMPISPKGSGGKPEDAGSLQAHIKQEDIKQEPPSPYKLNNGSGSASGGGVVSAPPPNSGSVGAIFNFNVPTATALSQKQFHYPMHHPHRSPTDLRDEEADREEITQGTKSGESSEKDKPALDDQERDEVEEEDEDEEDDDEDDEDDEQFMQELASVNASAGFDDLVPYAMPKVVITPTPTPPPVATIVTPIKRKQFTIVRSLTPLQPSNSPHQQLKHLHQRRGETPPTVITRVPTPTINHFTIIRTQQHPHTHPHNTPPPLFFKQKVQGSPVIATVTTSTLSSSSSNPANNEAPNKFSNFPTQHQPTTTTTISCNTNNNATPIIRKLLTLQEGAELGGSHKGTGRAAILYDALVLDTLHGQDEEEEEDEGNAEKQENPKVAGKEQVTTSQPATMLLITDVNAYNQQHVAGNAATPVSGAATLRPVSFISINACNKITLPANARILTAATATSTAAGAAVTSQAGATLTVMTKASAATNHSSSNASDITITAASAAPVPTSGSSIVMINSTTNPSTSSNSTSCSAAAHQACVPSSPAGMGLGHAANIATPPASAPAQIMGGGPASQKMFFAMTHPYTLLQRSHQPGTPSLEHLQLDAFAPGGYTLRNHNGLSSLPPPVSAQPTMLLHGYPPSHGVEPPARSPSYKSMPSTPKSATYLMSAPPERGMDGGMSGCASAAASGGDESDIDADGQQFILAPTPAQLGRAPLQRRKNLSQSKSESNVSFGANLGASNGQHISRKLHSPTMMESSSPIIGHVNSSNLSSALPTPTSSTTTPNSDEQLPLTPTTSSSNSNLNQQQPKSPMKGAPGSTAAALKKKNDEMNNSVLKQVDFEKKYKALPQFQPEDCQSPSAIAVPSSPRVYGTNYRKKNTAPPPVQKLMCEDDSIDEPASAPPTTTQRFFGPDFNNELKELESSDQTGRSPRTPKTPLQSARSDASEKGHRKVLETRRSLVLQLFAEHGNFPTAQATMAFQSKHSDVFPRKQDLQLKIREVRQKLLGQASCTPHSAGPNTPSDSNSSSTTLSASSTSLNMQTTSAADVFQYY</sequence>
<accession>Q9U1H0</accession>
<accession>A8JR51</accession>
<accession>B5RIQ9</accession>
<accession>Q29R05</accession>
<accession>Q9VDN9</accession>
<reference key="1">
    <citation type="journal article" date="2000" name="Genes Dev.">
        <title>Relief of gene repression by torso RTK signaling: role of capicua in Drosophila terminal and dorsoventral patterning.</title>
        <authorList>
            <person name="Jimenez G."/>
            <person name="Guichet A."/>
            <person name="Ephrussi A."/>
            <person name="Casanova J."/>
        </authorList>
    </citation>
    <scope>NUCLEOTIDE SEQUENCE [MRNA] (ISOFORM A)</scope>
    <scope>FUNCTION</scope>
    <scope>INTERACTION WITH GRO</scope>
    <scope>SUBCELLULAR LOCATION</scope>
    <scope>TISSUE SPECIFICITY</scope>
    <scope>DEVELOPMENTAL STAGE</scope>
    <scope>INDUCTION</scope>
    <source>
        <tissue>Embryo</tissue>
    </source>
</reference>
<reference key="2">
    <citation type="journal article" date="2000" name="Science">
        <title>The genome sequence of Drosophila melanogaster.</title>
        <authorList>
            <person name="Adams M.D."/>
            <person name="Celniker S.E."/>
            <person name="Holt R.A."/>
            <person name="Evans C.A."/>
            <person name="Gocayne J.D."/>
            <person name="Amanatides P.G."/>
            <person name="Scherer S.E."/>
            <person name="Li P.W."/>
            <person name="Hoskins R.A."/>
            <person name="Galle R.F."/>
            <person name="George R.A."/>
            <person name="Lewis S.E."/>
            <person name="Richards S."/>
            <person name="Ashburner M."/>
            <person name="Henderson S.N."/>
            <person name="Sutton G.G."/>
            <person name="Wortman J.R."/>
            <person name="Yandell M.D."/>
            <person name="Zhang Q."/>
            <person name="Chen L.X."/>
            <person name="Brandon R.C."/>
            <person name="Rogers Y.-H.C."/>
            <person name="Blazej R.G."/>
            <person name="Champe M."/>
            <person name="Pfeiffer B.D."/>
            <person name="Wan K.H."/>
            <person name="Doyle C."/>
            <person name="Baxter E.G."/>
            <person name="Helt G."/>
            <person name="Nelson C.R."/>
            <person name="Miklos G.L.G."/>
            <person name="Abril J.F."/>
            <person name="Agbayani A."/>
            <person name="An H.-J."/>
            <person name="Andrews-Pfannkoch C."/>
            <person name="Baldwin D."/>
            <person name="Ballew R.M."/>
            <person name="Basu A."/>
            <person name="Baxendale J."/>
            <person name="Bayraktaroglu L."/>
            <person name="Beasley E.M."/>
            <person name="Beeson K.Y."/>
            <person name="Benos P.V."/>
            <person name="Berman B.P."/>
            <person name="Bhandari D."/>
            <person name="Bolshakov S."/>
            <person name="Borkova D."/>
            <person name="Botchan M.R."/>
            <person name="Bouck J."/>
            <person name="Brokstein P."/>
            <person name="Brottier P."/>
            <person name="Burtis K.C."/>
            <person name="Busam D.A."/>
            <person name="Butler H."/>
            <person name="Cadieu E."/>
            <person name="Center A."/>
            <person name="Chandra I."/>
            <person name="Cherry J.M."/>
            <person name="Cawley S."/>
            <person name="Dahlke C."/>
            <person name="Davenport L.B."/>
            <person name="Davies P."/>
            <person name="de Pablos B."/>
            <person name="Delcher A."/>
            <person name="Deng Z."/>
            <person name="Mays A.D."/>
            <person name="Dew I."/>
            <person name="Dietz S.M."/>
            <person name="Dodson K."/>
            <person name="Doup L.E."/>
            <person name="Downes M."/>
            <person name="Dugan-Rocha S."/>
            <person name="Dunkov B.C."/>
            <person name="Dunn P."/>
            <person name="Durbin K.J."/>
            <person name="Evangelista C.C."/>
            <person name="Ferraz C."/>
            <person name="Ferriera S."/>
            <person name="Fleischmann W."/>
            <person name="Fosler C."/>
            <person name="Gabrielian A.E."/>
            <person name="Garg N.S."/>
            <person name="Gelbart W.M."/>
            <person name="Glasser K."/>
            <person name="Glodek A."/>
            <person name="Gong F."/>
            <person name="Gorrell J.H."/>
            <person name="Gu Z."/>
            <person name="Guan P."/>
            <person name="Harris M."/>
            <person name="Harris N.L."/>
            <person name="Harvey D.A."/>
            <person name="Heiman T.J."/>
            <person name="Hernandez J.R."/>
            <person name="Houck J."/>
            <person name="Hostin D."/>
            <person name="Houston K.A."/>
            <person name="Howland T.J."/>
            <person name="Wei M.-H."/>
            <person name="Ibegwam C."/>
            <person name="Jalali M."/>
            <person name="Kalush F."/>
            <person name="Karpen G.H."/>
            <person name="Ke Z."/>
            <person name="Kennison J.A."/>
            <person name="Ketchum K.A."/>
            <person name="Kimmel B.E."/>
            <person name="Kodira C.D."/>
            <person name="Kraft C.L."/>
            <person name="Kravitz S."/>
            <person name="Kulp D."/>
            <person name="Lai Z."/>
            <person name="Lasko P."/>
            <person name="Lei Y."/>
            <person name="Levitsky A.A."/>
            <person name="Li J.H."/>
            <person name="Li Z."/>
            <person name="Liang Y."/>
            <person name="Lin X."/>
            <person name="Liu X."/>
            <person name="Mattei B."/>
            <person name="McIntosh T.C."/>
            <person name="McLeod M.P."/>
            <person name="McPherson D."/>
            <person name="Merkulov G."/>
            <person name="Milshina N.V."/>
            <person name="Mobarry C."/>
            <person name="Morris J."/>
            <person name="Moshrefi A."/>
            <person name="Mount S.M."/>
            <person name="Moy M."/>
            <person name="Murphy B."/>
            <person name="Murphy L."/>
            <person name="Muzny D.M."/>
            <person name="Nelson D.L."/>
            <person name="Nelson D.R."/>
            <person name="Nelson K.A."/>
            <person name="Nixon K."/>
            <person name="Nusskern D.R."/>
            <person name="Pacleb J.M."/>
            <person name="Palazzolo M."/>
            <person name="Pittman G.S."/>
            <person name="Pan S."/>
            <person name="Pollard J."/>
            <person name="Puri V."/>
            <person name="Reese M.G."/>
            <person name="Reinert K."/>
            <person name="Remington K."/>
            <person name="Saunders R.D.C."/>
            <person name="Scheeler F."/>
            <person name="Shen H."/>
            <person name="Shue B.C."/>
            <person name="Siden-Kiamos I."/>
            <person name="Simpson M."/>
            <person name="Skupski M.P."/>
            <person name="Smith T.J."/>
            <person name="Spier E."/>
            <person name="Spradling A.C."/>
            <person name="Stapleton M."/>
            <person name="Strong R."/>
            <person name="Sun E."/>
            <person name="Svirskas R."/>
            <person name="Tector C."/>
            <person name="Turner R."/>
            <person name="Venter E."/>
            <person name="Wang A.H."/>
            <person name="Wang X."/>
            <person name="Wang Z.-Y."/>
            <person name="Wassarman D.A."/>
            <person name="Weinstock G.M."/>
            <person name="Weissenbach J."/>
            <person name="Williams S.M."/>
            <person name="Woodage T."/>
            <person name="Worley K.C."/>
            <person name="Wu D."/>
            <person name="Yang S."/>
            <person name="Yao Q.A."/>
            <person name="Ye J."/>
            <person name="Yeh R.-F."/>
            <person name="Zaveri J.S."/>
            <person name="Zhan M."/>
            <person name="Zhang G."/>
            <person name="Zhao Q."/>
            <person name="Zheng L."/>
            <person name="Zheng X.H."/>
            <person name="Zhong F.N."/>
            <person name="Zhong W."/>
            <person name="Zhou X."/>
            <person name="Zhu S.C."/>
            <person name="Zhu X."/>
            <person name="Smith H.O."/>
            <person name="Gibbs R.A."/>
            <person name="Myers E.W."/>
            <person name="Rubin G.M."/>
            <person name="Venter J.C."/>
        </authorList>
    </citation>
    <scope>NUCLEOTIDE SEQUENCE [LARGE SCALE GENOMIC DNA]</scope>
    <source>
        <strain>Berkeley</strain>
    </source>
</reference>
<reference key="3">
    <citation type="journal article" date="2002" name="Genome Biol.">
        <title>Annotation of the Drosophila melanogaster euchromatic genome: a systematic review.</title>
        <authorList>
            <person name="Misra S."/>
            <person name="Crosby M.A."/>
            <person name="Mungall C.J."/>
            <person name="Matthews B.B."/>
            <person name="Campbell K.S."/>
            <person name="Hradecky P."/>
            <person name="Huang Y."/>
            <person name="Kaminker J.S."/>
            <person name="Millburn G.H."/>
            <person name="Prochnik S.E."/>
            <person name="Smith C.D."/>
            <person name="Tupy J.L."/>
            <person name="Whitfield E.J."/>
            <person name="Bayraktaroglu L."/>
            <person name="Berman B.P."/>
            <person name="Bettencourt B.R."/>
            <person name="Celniker S.E."/>
            <person name="de Grey A.D.N.J."/>
            <person name="Drysdale R.A."/>
            <person name="Harris N.L."/>
            <person name="Richter J."/>
            <person name="Russo S."/>
            <person name="Schroeder A.J."/>
            <person name="Shu S.Q."/>
            <person name="Stapleton M."/>
            <person name="Yamada C."/>
            <person name="Ashburner M."/>
            <person name="Gelbart W.M."/>
            <person name="Rubin G.M."/>
            <person name="Lewis S.E."/>
        </authorList>
    </citation>
    <scope>GENOME REANNOTATION</scope>
    <scope>ALTERNATIVE SPLICING</scope>
    <source>
        <strain>Berkeley</strain>
    </source>
</reference>
<reference key="4">
    <citation type="submission" date="2008-09" db="EMBL/GenBank/DDBJ databases">
        <authorList>
            <person name="Stapleton M."/>
            <person name="Carlson J.W."/>
            <person name="Booth B."/>
            <person name="Chavez C."/>
            <person name="Frise E."/>
            <person name="George R.A."/>
            <person name="Pacleb J.M."/>
            <person name="Park S."/>
            <person name="Wan K.H."/>
            <person name="Yu C."/>
            <person name="Celniker S.E."/>
        </authorList>
    </citation>
    <scope>NUCLEOTIDE SEQUENCE [LARGE SCALE MRNA] (ISOFORM A)</scope>
    <source>
        <strain>Berkeley</strain>
        <tissue>Embryo</tissue>
    </source>
</reference>
<reference key="5">
    <citation type="journal article" date="2001" name="Development">
        <title>Establishment of dorsal-ventral polarity of the Drosophila egg requires capicua action in ovarian follicle cells.</title>
        <authorList>
            <person name="Goff D.J."/>
            <person name="Nilson L.A."/>
            <person name="Morisato D."/>
        </authorList>
    </citation>
    <scope>FUNCTION</scope>
    <scope>SUBCELLULAR LOCATION</scope>
    <scope>TISSUE SPECIFICITY</scope>
</reference>
<reference key="6">
    <citation type="journal article" date="2002" name="Development">
        <title>EGFR signalling inhibits capicua-dependent repression during specification of Drosophila wing veins.</title>
        <authorList>
            <person name="Roch F."/>
            <person name="Jimenez G."/>
            <person name="Casanova J."/>
        </authorList>
    </citation>
    <scope>FUNCTION</scope>
    <scope>SUBCELLULAR LOCATION</scope>
    <scope>TISSUE SPECIFICITY</scope>
    <scope>INDUCTION</scope>
</reference>
<reference key="7">
    <citation type="journal article" date="2004" name="EMBO J.">
        <title>Capicua integrates input from two maternal systems in Drosophila terminal patterning.</title>
        <authorList>
            <person name="Cinnamon E."/>
            <person name="Gur-Wahnon D."/>
            <person name="Helman A."/>
            <person name="St Johnston D."/>
            <person name="Jimenez G."/>
            <person name="Paroush Z."/>
        </authorList>
    </citation>
    <scope>FUNCTION</scope>
</reference>
<reference key="8">
    <citation type="journal article" date="2008" name="J. Proteome Res.">
        <title>Phosphoproteome analysis of Drosophila melanogaster embryos.</title>
        <authorList>
            <person name="Zhai B."/>
            <person name="Villen J."/>
            <person name="Beausoleil S.A."/>
            <person name="Mintseris J."/>
            <person name="Gygi S.P."/>
        </authorList>
    </citation>
    <scope>PHOSPHORYLATION [LARGE SCALE ANALYSIS] AT SER-41; SER-49 AND THR-1716</scope>
    <scope>IDENTIFICATION BY MASS SPECTROMETRY</scope>
    <source>
        <tissue>Embryo</tissue>
    </source>
</reference>
<comment type="function">
    <text evidence="3 4 5 6">Transcriptional repressor required for the specification of numerous cell types during embryonic development. Required for terminal patterning of early embryos. May associate with gro to repress tll and hkb, restricting their expression to embryonic terminal poles where they initiate correct development of head and tail structures. Required for dorsoventral patterning of oocytes and early embryos. Cooperates with dl to repress zen and other dorsal specific genes within the embryo and promotes expression of the ventralizing factor pip in ovarian follicle cells. Required during wing development for the specification of intervein areas, where it mediates localized repression of vein specific genes such as aos, dpp and vvl.</text>
</comment>
<comment type="subunit">
    <text evidence="3">Interacts with gro.</text>
</comment>
<comment type="interaction">
    <interactant intactId="EBI-98330">
        <id>Q9U1H0</id>
    </interactant>
    <interactant intactId="EBI-867790">
        <id>P40417</id>
        <label>rl</label>
    </interactant>
    <organismsDiffer>false</organismsDiffer>
    <experiments>3</experiments>
</comment>
<comment type="interaction">
    <interactant intactId="EBI-98330">
        <id>Q9U1H0</id>
    </interactant>
    <interactant intactId="EBI-959949">
        <id>P28482</id>
        <label>MAPK1</label>
    </interactant>
    <organismsDiffer>true</organismsDiffer>
    <experiments>2</experiments>
</comment>
<comment type="subcellular location">
    <subcellularLocation>
        <location evidence="1 3 4 5">Nucleus</location>
    </subcellularLocation>
</comment>
<comment type="alternative products">
    <event type="alternative splicing"/>
    <isoform>
        <id>Q9U1H0-1</id>
        <name>B</name>
        <sequence type="displayed"/>
    </isoform>
    <isoform>
        <id>Q9U1H0-2</id>
        <name>A</name>
        <sequence type="described" ref="VSP_036477"/>
    </isoform>
</comment>
<comment type="tissue specificity">
    <text evidence="3 4 5">Expressed in the central region of embryos. Also expressed in ovarian follicle cells, the wing imaginal disks and the wing pouch.</text>
</comment>
<comment type="developmental stage">
    <text evidence="3">Expressed maternally in stage 1-3 blastoderm embryos.</text>
</comment>
<comment type="induction">
    <text evidence="3 5">Subject to local inactivation by the RAS-RAF-MAPK signal transduction pathway, which leads to relief of target gene repression. This pathway may be locally activated by a variety of ligands and receptor tyrosine kinases (RTKs) according to the developmental stage and tissue. In terminal patterning, activation of tor by the locally processed ligand trk may promote cic inactivation specifically at the embryonic terminal poles. In the developing wing, activation of Egfr by vn may lead to cic inactivation specifically in prospective vein tissue.</text>
</comment>
<comment type="sequence caution" evidence="10">
    <conflict type="frameshift">
        <sequence resource="EMBL-CDS" id="ABC86297"/>
    </conflict>
</comment>
<name>CIC_DROME</name>
<keyword id="KW-0025">Alternative splicing</keyword>
<keyword id="KW-0217">Developmental protein</keyword>
<keyword id="KW-0238">DNA-binding</keyword>
<keyword id="KW-0539">Nucleus</keyword>
<keyword id="KW-0597">Phosphoprotein</keyword>
<keyword id="KW-1185">Reference proteome</keyword>
<keyword id="KW-0678">Repressor</keyword>
<keyword id="KW-0804">Transcription</keyword>
<keyword id="KW-0805">Transcription regulation</keyword>
<evidence type="ECO:0000255" key="1">
    <source>
        <dbReference type="PROSITE-ProRule" id="PRU00267"/>
    </source>
</evidence>
<evidence type="ECO:0000256" key="2">
    <source>
        <dbReference type="SAM" id="MobiDB-lite"/>
    </source>
</evidence>
<evidence type="ECO:0000269" key="3">
    <source>
    </source>
</evidence>
<evidence type="ECO:0000269" key="4">
    <source>
    </source>
</evidence>
<evidence type="ECO:0000269" key="5">
    <source>
    </source>
</evidence>
<evidence type="ECO:0000269" key="6">
    <source>
    </source>
</evidence>
<evidence type="ECO:0000269" key="7">
    <source>
    </source>
</evidence>
<evidence type="ECO:0000303" key="8">
    <source>
    </source>
</evidence>
<evidence type="ECO:0000303" key="9">
    <source ref="4"/>
</evidence>
<evidence type="ECO:0000305" key="10"/>
<proteinExistence type="evidence at protein level"/>
<organism>
    <name type="scientific">Drosophila melanogaster</name>
    <name type="common">Fruit fly</name>
    <dbReference type="NCBI Taxonomy" id="7227"/>
    <lineage>
        <taxon>Eukaryota</taxon>
        <taxon>Metazoa</taxon>
        <taxon>Ecdysozoa</taxon>
        <taxon>Arthropoda</taxon>
        <taxon>Hexapoda</taxon>
        <taxon>Insecta</taxon>
        <taxon>Pterygota</taxon>
        <taxon>Neoptera</taxon>
        <taxon>Endopterygota</taxon>
        <taxon>Diptera</taxon>
        <taxon>Brachycera</taxon>
        <taxon>Muscomorpha</taxon>
        <taxon>Ephydroidea</taxon>
        <taxon>Drosophilidae</taxon>
        <taxon>Drosophila</taxon>
        <taxon>Sophophora</taxon>
    </lineage>
</organism>
<feature type="chain" id="PRO_0000048600" description="Putative transcription factor capicua">
    <location>
        <begin position="1"/>
        <end position="1832"/>
    </location>
</feature>
<feature type="DNA-binding region" description="HMG box" evidence="1">
    <location>
        <begin position="490"/>
        <end position="558"/>
    </location>
</feature>
<feature type="region of interest" description="Disordered" evidence="2">
    <location>
        <begin position="66"/>
        <end position="121"/>
    </location>
</feature>
<feature type="region of interest" description="Disordered" evidence="2">
    <location>
        <begin position="135"/>
        <end position="227"/>
    </location>
</feature>
<feature type="region of interest" description="Disordered" evidence="2">
    <location>
        <begin position="323"/>
        <end position="353"/>
    </location>
</feature>
<feature type="region of interest" description="Disordered" evidence="2">
    <location>
        <begin position="389"/>
        <end position="427"/>
    </location>
</feature>
<feature type="region of interest" description="Disordered" evidence="2">
    <location>
        <begin position="444"/>
        <end position="493"/>
    </location>
</feature>
<feature type="region of interest" description="Disordered" evidence="2">
    <location>
        <begin position="563"/>
        <end position="619"/>
    </location>
</feature>
<feature type="region of interest" description="Disordered" evidence="2">
    <location>
        <begin position="690"/>
        <end position="739"/>
    </location>
</feature>
<feature type="region of interest" description="Disordered" evidence="2">
    <location>
        <begin position="784"/>
        <end position="845"/>
    </location>
</feature>
<feature type="region of interest" description="Interaction with gro">
    <location>
        <begin position="834"/>
        <end position="1832"/>
    </location>
</feature>
<feature type="region of interest" description="Disordered" evidence="2">
    <location>
        <begin position="874"/>
        <end position="938"/>
    </location>
</feature>
<feature type="region of interest" description="Disordered" evidence="2">
    <location>
        <begin position="1069"/>
        <end position="1105"/>
    </location>
</feature>
<feature type="region of interest" description="Disordered" evidence="2">
    <location>
        <begin position="1151"/>
        <end position="1178"/>
    </location>
</feature>
<feature type="region of interest" description="Disordered" evidence="2">
    <location>
        <begin position="1457"/>
        <end position="1602"/>
    </location>
</feature>
<feature type="region of interest" description="Disordered" evidence="2">
    <location>
        <begin position="1632"/>
        <end position="1668"/>
    </location>
</feature>
<feature type="region of interest" description="Disordered" evidence="2">
    <location>
        <begin position="1701"/>
        <end position="1733"/>
    </location>
</feature>
<feature type="region of interest" description="Disordered" evidence="2">
    <location>
        <begin position="1789"/>
        <end position="1817"/>
    </location>
</feature>
<feature type="compositionally biased region" description="Low complexity" evidence="2">
    <location>
        <begin position="96"/>
        <end position="121"/>
    </location>
</feature>
<feature type="compositionally biased region" description="Pro residues" evidence="2">
    <location>
        <begin position="172"/>
        <end position="186"/>
    </location>
</feature>
<feature type="compositionally biased region" description="Low complexity" evidence="2">
    <location>
        <begin position="187"/>
        <end position="203"/>
    </location>
</feature>
<feature type="compositionally biased region" description="Low complexity" evidence="2">
    <location>
        <begin position="211"/>
        <end position="223"/>
    </location>
</feature>
<feature type="compositionally biased region" description="Low complexity" evidence="2">
    <location>
        <begin position="323"/>
        <end position="342"/>
    </location>
</feature>
<feature type="compositionally biased region" description="Acidic residues" evidence="2">
    <location>
        <begin position="397"/>
        <end position="408"/>
    </location>
</feature>
<feature type="compositionally biased region" description="Polar residues" evidence="2">
    <location>
        <begin position="409"/>
        <end position="422"/>
    </location>
</feature>
<feature type="compositionally biased region" description="Low complexity" evidence="2">
    <location>
        <begin position="446"/>
        <end position="484"/>
    </location>
</feature>
<feature type="compositionally biased region" description="Gly residues" evidence="2">
    <location>
        <begin position="610"/>
        <end position="619"/>
    </location>
</feature>
<feature type="compositionally biased region" description="Basic and acidic residues" evidence="2">
    <location>
        <begin position="903"/>
        <end position="914"/>
    </location>
</feature>
<feature type="compositionally biased region" description="Acidic residues" evidence="2">
    <location>
        <begin position="915"/>
        <end position="938"/>
    </location>
</feature>
<feature type="compositionally biased region" description="Polar residues" evidence="2">
    <location>
        <begin position="1078"/>
        <end position="1091"/>
    </location>
</feature>
<feature type="compositionally biased region" description="Low complexity" evidence="2">
    <location>
        <begin position="1092"/>
        <end position="1105"/>
    </location>
</feature>
<feature type="compositionally biased region" description="Low complexity" evidence="2">
    <location>
        <begin position="1462"/>
        <end position="1471"/>
    </location>
</feature>
<feature type="compositionally biased region" description="Polar residues" evidence="2">
    <location>
        <begin position="1503"/>
        <end position="1525"/>
    </location>
</feature>
<feature type="compositionally biased region" description="Low complexity" evidence="2">
    <location>
        <begin position="1547"/>
        <end position="1589"/>
    </location>
</feature>
<feature type="compositionally biased region" description="Basic and acidic residues" evidence="2">
    <location>
        <begin position="1724"/>
        <end position="1733"/>
    </location>
</feature>
<feature type="compositionally biased region" description="Polar residues" evidence="2">
    <location>
        <begin position="1789"/>
        <end position="1799"/>
    </location>
</feature>
<feature type="compositionally biased region" description="Low complexity" evidence="2">
    <location>
        <begin position="1800"/>
        <end position="1817"/>
    </location>
</feature>
<feature type="modified residue" description="Phosphoserine" evidence="7">
    <location>
        <position position="41"/>
    </location>
</feature>
<feature type="modified residue" description="Phosphoserine" evidence="7">
    <location>
        <position position="49"/>
    </location>
</feature>
<feature type="modified residue" description="Phosphothreonine" evidence="7">
    <location>
        <position position="1716"/>
    </location>
</feature>
<feature type="splice variant" id="VSP_036477" description="In isoform A." evidence="8 9">
    <location>
        <begin position="887"/>
        <end position="1315"/>
    </location>
</feature>